<protein>
    <recommendedName>
        <fullName evidence="1">Endoribonuclease YbeY</fullName>
        <ecNumber evidence="1">3.1.-.-</ecNumber>
    </recommendedName>
</protein>
<comment type="function">
    <text evidence="1">Single strand-specific metallo-endoribonuclease involved in late-stage 70S ribosome quality control and in maturation of the 3' terminus of the 16S rRNA.</text>
</comment>
<comment type="cofactor">
    <cofactor evidence="1">
        <name>Zn(2+)</name>
        <dbReference type="ChEBI" id="CHEBI:29105"/>
    </cofactor>
    <text evidence="1">Binds 1 zinc ion.</text>
</comment>
<comment type="subcellular location">
    <subcellularLocation>
        <location evidence="1">Cytoplasm</location>
    </subcellularLocation>
</comment>
<comment type="similarity">
    <text evidence="1">Belongs to the endoribonuclease YbeY family.</text>
</comment>
<evidence type="ECO:0000255" key="1">
    <source>
        <dbReference type="HAMAP-Rule" id="MF_00009"/>
    </source>
</evidence>
<keyword id="KW-0963">Cytoplasm</keyword>
<keyword id="KW-0255">Endonuclease</keyword>
<keyword id="KW-0378">Hydrolase</keyword>
<keyword id="KW-0479">Metal-binding</keyword>
<keyword id="KW-0540">Nuclease</keyword>
<keyword id="KW-1185">Reference proteome</keyword>
<keyword id="KW-0690">Ribosome biogenesis</keyword>
<keyword id="KW-0698">rRNA processing</keyword>
<keyword id="KW-0862">Zinc</keyword>
<gene>
    <name evidence="1" type="primary">ybeY</name>
    <name type="ordered locus">DNO_1243</name>
</gene>
<accession>A5EXA5</accession>
<sequence>MSTIVIDYQTESIPDDWLYPAEWRIQRWLDCALTVLAIDEALEVTIRLVDNDEITELNAEYRGKNAPTNVLSFPCDWDLPEEPRLLGDIVIAVQIVNQEAKAQKKKMEQHWAHMTIHGLLHLLDYDHIEEKEAQIMEDLERTILAQLGFPDPYCA</sequence>
<proteinExistence type="inferred from homology"/>
<organism>
    <name type="scientific">Dichelobacter nodosus (strain VCS1703A)</name>
    <dbReference type="NCBI Taxonomy" id="246195"/>
    <lineage>
        <taxon>Bacteria</taxon>
        <taxon>Pseudomonadati</taxon>
        <taxon>Pseudomonadota</taxon>
        <taxon>Gammaproteobacteria</taxon>
        <taxon>Cardiobacteriales</taxon>
        <taxon>Cardiobacteriaceae</taxon>
        <taxon>Dichelobacter</taxon>
    </lineage>
</organism>
<feature type="chain" id="PRO_0000321774" description="Endoribonuclease YbeY">
    <location>
        <begin position="1"/>
        <end position="155"/>
    </location>
</feature>
<feature type="binding site" evidence="1">
    <location>
        <position position="117"/>
    </location>
    <ligand>
        <name>Zn(2+)</name>
        <dbReference type="ChEBI" id="CHEBI:29105"/>
        <note>catalytic</note>
    </ligand>
</feature>
<feature type="binding site" evidence="1">
    <location>
        <position position="121"/>
    </location>
    <ligand>
        <name>Zn(2+)</name>
        <dbReference type="ChEBI" id="CHEBI:29105"/>
        <note>catalytic</note>
    </ligand>
</feature>
<feature type="binding site" evidence="1">
    <location>
        <position position="127"/>
    </location>
    <ligand>
        <name>Zn(2+)</name>
        <dbReference type="ChEBI" id="CHEBI:29105"/>
        <note>catalytic</note>
    </ligand>
</feature>
<reference key="1">
    <citation type="journal article" date="2007" name="Nat. Biotechnol.">
        <title>Genome sequence and identification of candidate vaccine antigens from the animal pathogen Dichelobacter nodosus.</title>
        <authorList>
            <person name="Myers G.S.A."/>
            <person name="Parker D."/>
            <person name="Al-Hasani K."/>
            <person name="Kennan R.M."/>
            <person name="Seemann T."/>
            <person name="Ren Q."/>
            <person name="Badger J.H."/>
            <person name="Selengut J.D."/>
            <person name="Deboy R.T."/>
            <person name="Tettelin H."/>
            <person name="Boyce J.D."/>
            <person name="McCarl V.P."/>
            <person name="Han X."/>
            <person name="Nelson W.C."/>
            <person name="Madupu R."/>
            <person name="Mohamoud Y."/>
            <person name="Holley T."/>
            <person name="Fedorova N."/>
            <person name="Khouri H."/>
            <person name="Bottomley S.P."/>
            <person name="Whittington R.J."/>
            <person name="Adler B."/>
            <person name="Songer J.G."/>
            <person name="Rood J.I."/>
            <person name="Paulsen I.T."/>
        </authorList>
    </citation>
    <scope>NUCLEOTIDE SEQUENCE [LARGE SCALE GENOMIC DNA]</scope>
    <source>
        <strain>VCS1703A</strain>
    </source>
</reference>
<name>YBEY_DICNV</name>
<dbReference type="EC" id="3.1.-.-" evidence="1"/>
<dbReference type="EMBL" id="CP000513">
    <property type="protein sequence ID" value="ABQ13556.1"/>
    <property type="molecule type" value="Genomic_DNA"/>
</dbReference>
<dbReference type="RefSeq" id="WP_012031538.1">
    <property type="nucleotide sequence ID" value="NC_009446.1"/>
</dbReference>
<dbReference type="SMR" id="A5EXA5"/>
<dbReference type="STRING" id="246195.DNO_1243"/>
<dbReference type="KEGG" id="dno:DNO_1243"/>
<dbReference type="eggNOG" id="COG0319">
    <property type="taxonomic scope" value="Bacteria"/>
</dbReference>
<dbReference type="HOGENOM" id="CLU_106710_0_1_6"/>
<dbReference type="OrthoDB" id="9807740at2"/>
<dbReference type="Proteomes" id="UP000000248">
    <property type="component" value="Chromosome"/>
</dbReference>
<dbReference type="GO" id="GO:0005737">
    <property type="term" value="C:cytoplasm"/>
    <property type="evidence" value="ECO:0007669"/>
    <property type="project" value="UniProtKB-SubCell"/>
</dbReference>
<dbReference type="GO" id="GO:0004222">
    <property type="term" value="F:metalloendopeptidase activity"/>
    <property type="evidence" value="ECO:0007669"/>
    <property type="project" value="InterPro"/>
</dbReference>
<dbReference type="GO" id="GO:0004521">
    <property type="term" value="F:RNA endonuclease activity"/>
    <property type="evidence" value="ECO:0007669"/>
    <property type="project" value="UniProtKB-UniRule"/>
</dbReference>
<dbReference type="GO" id="GO:0008270">
    <property type="term" value="F:zinc ion binding"/>
    <property type="evidence" value="ECO:0007669"/>
    <property type="project" value="UniProtKB-UniRule"/>
</dbReference>
<dbReference type="GO" id="GO:0006364">
    <property type="term" value="P:rRNA processing"/>
    <property type="evidence" value="ECO:0007669"/>
    <property type="project" value="UniProtKB-UniRule"/>
</dbReference>
<dbReference type="Gene3D" id="3.40.390.30">
    <property type="entry name" value="Metalloproteases ('zincins'), catalytic domain"/>
    <property type="match status" value="1"/>
</dbReference>
<dbReference type="HAMAP" id="MF_00009">
    <property type="entry name" value="Endoribonucl_YbeY"/>
    <property type="match status" value="1"/>
</dbReference>
<dbReference type="InterPro" id="IPR023091">
    <property type="entry name" value="MetalPrtase_cat_dom_sf_prd"/>
</dbReference>
<dbReference type="InterPro" id="IPR002036">
    <property type="entry name" value="YbeY"/>
</dbReference>
<dbReference type="NCBIfam" id="TIGR00043">
    <property type="entry name" value="rRNA maturation RNase YbeY"/>
    <property type="match status" value="1"/>
</dbReference>
<dbReference type="PANTHER" id="PTHR46986">
    <property type="entry name" value="ENDORIBONUCLEASE YBEY, CHLOROPLASTIC"/>
    <property type="match status" value="1"/>
</dbReference>
<dbReference type="PANTHER" id="PTHR46986:SF1">
    <property type="entry name" value="ENDORIBONUCLEASE YBEY, CHLOROPLASTIC"/>
    <property type="match status" value="1"/>
</dbReference>
<dbReference type="Pfam" id="PF02130">
    <property type="entry name" value="YbeY"/>
    <property type="match status" value="1"/>
</dbReference>
<dbReference type="SUPFAM" id="SSF55486">
    <property type="entry name" value="Metalloproteases ('zincins'), catalytic domain"/>
    <property type="match status" value="1"/>
</dbReference>